<keyword id="KW-0032">Aminotransferase</keyword>
<keyword id="KW-0963">Cytoplasm</keyword>
<keyword id="KW-1267">Proteomics identification</keyword>
<keyword id="KW-0663">Pyridoxal phosphate</keyword>
<keyword id="KW-1185">Reference proteome</keyword>
<keyword id="KW-0808">Transferase</keyword>
<proteinExistence type="evidence at protein level"/>
<organism>
    <name type="scientific">Homo sapiens</name>
    <name type="common">Human</name>
    <dbReference type="NCBI Taxonomy" id="9606"/>
    <lineage>
        <taxon>Eukaryota</taxon>
        <taxon>Metazoa</taxon>
        <taxon>Chordata</taxon>
        <taxon>Craniata</taxon>
        <taxon>Vertebrata</taxon>
        <taxon>Euteleostomi</taxon>
        <taxon>Mammalia</taxon>
        <taxon>Eutheria</taxon>
        <taxon>Euarchontoglires</taxon>
        <taxon>Primates</taxon>
        <taxon>Haplorrhini</taxon>
        <taxon>Catarrhini</taxon>
        <taxon>Hominidae</taxon>
        <taxon>Homo</taxon>
    </lineage>
</organism>
<evidence type="ECO:0000250" key="1"/>
<evidence type="ECO:0000305" key="2"/>
<sequence length="421" mass="47305">MPTLSVFMDVPLAHKLEGSLLKTYKQDDYPNKIFLAYRVCMTNEGHPWVSLVVQKTRLQISQDPSLNYEYLPTMGLKSFIQASLALLFGKHSQAIVENRVGGVHTVGDSGAFQLGVQFLRAWHKDARIVYIISSQKELHGLVFQDMGFTVYEYSVWDPKKLCMDPDILLNVVEQIPHGCVLVMGNIIDCKLTPSGWAKLMSMIKSKQIFPFFDIPCQGLYTSDLEEDTRILQYFVSQGFEFFCSQSLSKNFGIYDEGVGMLVVVAVNNQQLLCVLSQLEGLAQALWLNPPNTGARVITSILCNPALLGEWKQSLKEVVENIMLTKEKVKEKLQLLGTPGSWGHITEQSGTHGYLGLNSQQVEYLVRKKHIYIPKNGQINFSCINANNINYITEGINEAVLLTESSEMCLPKEKKTLIGIKL</sequence>
<feature type="chain" id="PRO_0000332999" description="Putative aspartate aminotransferase, cytoplasmic 2">
    <location>
        <begin position="1"/>
        <end position="421"/>
    </location>
</feature>
<feature type="modified residue" description="N6-(pyridoxal phosphate)lysine" evidence="1">
    <location>
        <position position="249"/>
    </location>
</feature>
<feature type="sequence conflict" description="In Ref. 2; AAH29504." evidence="2" ref="2">
    <original>D</original>
    <variation>G</variation>
    <location>
        <position position="223"/>
    </location>
</feature>
<comment type="catalytic activity">
    <reaction>
        <text>L-aspartate + 2-oxoglutarate = oxaloacetate + L-glutamate</text>
        <dbReference type="Rhea" id="RHEA:21824"/>
        <dbReference type="ChEBI" id="CHEBI:16452"/>
        <dbReference type="ChEBI" id="CHEBI:16810"/>
        <dbReference type="ChEBI" id="CHEBI:29985"/>
        <dbReference type="ChEBI" id="CHEBI:29991"/>
        <dbReference type="EC" id="2.6.1.1"/>
    </reaction>
</comment>
<comment type="cofactor">
    <cofactor evidence="1">
        <name>pyridoxal 5'-phosphate</name>
        <dbReference type="ChEBI" id="CHEBI:597326"/>
    </cofactor>
</comment>
<comment type="subunit">
    <text evidence="1">Homodimer.</text>
</comment>
<comment type="subcellular location">
    <subcellularLocation>
        <location evidence="1">Cytoplasm</location>
    </subcellularLocation>
</comment>
<comment type="miscellaneous">
    <text>In eukaryotes there are cytoplasmic, mitochondrial and chloroplastic isozymes.</text>
</comment>
<comment type="similarity">
    <text evidence="2">Belongs to the class-I pyridoxal-phosphate-dependent aminotransferase family.</text>
</comment>
<comment type="caution">
    <text evidence="2">The residues that bind the substrate in other aspartate aminotransferases are not conserved.</text>
</comment>
<reference key="1">
    <citation type="journal article" date="2006" name="Nature">
        <title>DNA sequence and analysis of human chromosome 8.</title>
        <authorList>
            <person name="Nusbaum C."/>
            <person name="Mikkelsen T.S."/>
            <person name="Zody M.C."/>
            <person name="Asakawa S."/>
            <person name="Taudien S."/>
            <person name="Garber M."/>
            <person name="Kodira C.D."/>
            <person name="Schueler M.G."/>
            <person name="Shimizu A."/>
            <person name="Whittaker C.A."/>
            <person name="Chang J.L."/>
            <person name="Cuomo C.A."/>
            <person name="Dewar K."/>
            <person name="FitzGerald M.G."/>
            <person name="Yang X."/>
            <person name="Allen N.R."/>
            <person name="Anderson S."/>
            <person name="Asakawa T."/>
            <person name="Blechschmidt K."/>
            <person name="Bloom T."/>
            <person name="Borowsky M.L."/>
            <person name="Butler J."/>
            <person name="Cook A."/>
            <person name="Corum B."/>
            <person name="DeArellano K."/>
            <person name="DeCaprio D."/>
            <person name="Dooley K.T."/>
            <person name="Dorris L. III"/>
            <person name="Engels R."/>
            <person name="Gloeckner G."/>
            <person name="Hafez N."/>
            <person name="Hagopian D.S."/>
            <person name="Hall J.L."/>
            <person name="Ishikawa S.K."/>
            <person name="Jaffe D.B."/>
            <person name="Kamat A."/>
            <person name="Kudoh J."/>
            <person name="Lehmann R."/>
            <person name="Lokitsang T."/>
            <person name="Macdonald P."/>
            <person name="Major J.E."/>
            <person name="Matthews C.D."/>
            <person name="Mauceli E."/>
            <person name="Menzel U."/>
            <person name="Mihalev A.H."/>
            <person name="Minoshima S."/>
            <person name="Murayama Y."/>
            <person name="Naylor J.W."/>
            <person name="Nicol R."/>
            <person name="Nguyen C."/>
            <person name="O'Leary S.B."/>
            <person name="O'Neill K."/>
            <person name="Parker S.C.J."/>
            <person name="Polley A."/>
            <person name="Raymond C.K."/>
            <person name="Reichwald K."/>
            <person name="Rodriguez J."/>
            <person name="Sasaki T."/>
            <person name="Schilhabel M."/>
            <person name="Siddiqui R."/>
            <person name="Smith C.L."/>
            <person name="Sneddon T.P."/>
            <person name="Talamas J.A."/>
            <person name="Tenzin P."/>
            <person name="Topham K."/>
            <person name="Venkataraman V."/>
            <person name="Wen G."/>
            <person name="Yamazaki S."/>
            <person name="Young S.K."/>
            <person name="Zeng Q."/>
            <person name="Zimmer A.R."/>
            <person name="Rosenthal A."/>
            <person name="Birren B.W."/>
            <person name="Platzer M."/>
            <person name="Shimizu N."/>
            <person name="Lander E.S."/>
        </authorList>
    </citation>
    <scope>NUCLEOTIDE SEQUENCE [LARGE SCALE GENOMIC DNA]</scope>
</reference>
<reference key="2">
    <citation type="journal article" date="2004" name="Genome Res.">
        <title>The status, quality, and expansion of the NIH full-length cDNA project: the Mammalian Gene Collection (MGC).</title>
        <authorList>
            <consortium name="The MGC Project Team"/>
        </authorList>
    </citation>
    <scope>NUCLEOTIDE SEQUENCE [LARGE SCALE MRNA]</scope>
    <source>
        <tissue>Testis</tissue>
    </source>
</reference>
<protein>
    <recommendedName>
        <fullName>Putative aspartate aminotransferase, cytoplasmic 2</fullName>
        <ecNumber>2.6.1.1</ecNumber>
    </recommendedName>
    <alternativeName>
        <fullName>Glutamate oxaloacetate transaminase 1-like protein 1</fullName>
    </alternativeName>
    <alternativeName>
        <fullName>Transaminase A-like protein 1</fullName>
    </alternativeName>
</protein>
<name>AATC2_HUMAN</name>
<gene>
    <name type="primary">GOT1L1</name>
</gene>
<accession>Q8NHS2</accession>
<accession>A8MWL4</accession>
<dbReference type="EC" id="2.6.1.1"/>
<dbReference type="EMBL" id="AC130304">
    <property type="status" value="NOT_ANNOTATED_CDS"/>
    <property type="molecule type" value="Genomic_DNA"/>
</dbReference>
<dbReference type="EMBL" id="BC029504">
    <property type="protein sequence ID" value="AAH29504.1"/>
    <property type="molecule type" value="mRNA"/>
</dbReference>
<dbReference type="CCDS" id="CCDS47839.1"/>
<dbReference type="RefSeq" id="NP_689626.2">
    <property type="nucleotide sequence ID" value="NM_152413.3"/>
</dbReference>
<dbReference type="SMR" id="Q8NHS2"/>
<dbReference type="BioGRID" id="126475">
    <property type="interactions" value="5"/>
</dbReference>
<dbReference type="FunCoup" id="Q8NHS2">
    <property type="interactions" value="313"/>
</dbReference>
<dbReference type="IntAct" id="Q8NHS2">
    <property type="interactions" value="3"/>
</dbReference>
<dbReference type="STRING" id="9606.ENSP00000303077"/>
<dbReference type="BioMuta" id="GOT1L1"/>
<dbReference type="DMDM" id="269849534"/>
<dbReference type="MassIVE" id="Q8NHS2"/>
<dbReference type="PaxDb" id="9606-ENSP00000303077"/>
<dbReference type="PeptideAtlas" id="Q8NHS2"/>
<dbReference type="ProteomicsDB" id="73746"/>
<dbReference type="Antibodypedia" id="23475">
    <property type="antibodies" value="77 antibodies from 18 providers"/>
</dbReference>
<dbReference type="DNASU" id="137362"/>
<dbReference type="Ensembl" id="ENST00000307599.5">
    <property type="protein sequence ID" value="ENSP00000303077.4"/>
    <property type="gene ID" value="ENSG00000169154.7"/>
</dbReference>
<dbReference type="GeneID" id="137362"/>
<dbReference type="KEGG" id="hsa:137362"/>
<dbReference type="MANE-Select" id="ENST00000307599.5">
    <property type="protein sequence ID" value="ENSP00000303077.4"/>
    <property type="RefSeq nucleotide sequence ID" value="NM_152413.3"/>
    <property type="RefSeq protein sequence ID" value="NP_689626.2"/>
</dbReference>
<dbReference type="UCSC" id="uc011lbj.2">
    <property type="organism name" value="human"/>
</dbReference>
<dbReference type="AGR" id="HGNC:28487"/>
<dbReference type="CTD" id="137362"/>
<dbReference type="GeneCards" id="GOT1L1"/>
<dbReference type="HGNC" id="HGNC:28487">
    <property type="gene designation" value="GOT1L1"/>
</dbReference>
<dbReference type="HPA" id="ENSG00000169154">
    <property type="expression patterns" value="Tissue enriched (testis)"/>
</dbReference>
<dbReference type="neXtProt" id="NX_Q8NHS2"/>
<dbReference type="OpenTargets" id="ENSG00000169154"/>
<dbReference type="PharmGKB" id="PA142671724"/>
<dbReference type="VEuPathDB" id="HostDB:ENSG00000169154"/>
<dbReference type="eggNOG" id="KOG1412">
    <property type="taxonomic scope" value="Eukaryota"/>
</dbReference>
<dbReference type="GeneTree" id="ENSGT00950000183082"/>
<dbReference type="HOGENOM" id="CLU_032440_1_2_1"/>
<dbReference type="InParanoid" id="Q8NHS2"/>
<dbReference type="OMA" id="MSMIKSK"/>
<dbReference type="OrthoDB" id="6752799at2759"/>
<dbReference type="PAN-GO" id="Q8NHS2">
    <property type="GO annotations" value="3 GO annotations based on evolutionary models"/>
</dbReference>
<dbReference type="PhylomeDB" id="Q8NHS2"/>
<dbReference type="TreeFam" id="TF314089"/>
<dbReference type="BRENDA" id="2.6.1.1">
    <property type="organism ID" value="2681"/>
</dbReference>
<dbReference type="PathwayCommons" id="Q8NHS2"/>
<dbReference type="SignaLink" id="Q8NHS2"/>
<dbReference type="BioGRID-ORCS" id="137362">
    <property type="hits" value="11 hits in 1137 CRISPR screens"/>
</dbReference>
<dbReference type="GenomeRNAi" id="137362"/>
<dbReference type="Pharos" id="Q8NHS2">
    <property type="development level" value="Tdark"/>
</dbReference>
<dbReference type="PRO" id="PR:Q8NHS2"/>
<dbReference type="Proteomes" id="UP000005640">
    <property type="component" value="Chromosome 8"/>
</dbReference>
<dbReference type="RNAct" id="Q8NHS2">
    <property type="molecule type" value="protein"/>
</dbReference>
<dbReference type="Bgee" id="ENSG00000169154">
    <property type="expression patterns" value="Expressed in male germ line stem cell (sensu Vertebrata) in testis and 36 other cell types or tissues"/>
</dbReference>
<dbReference type="ExpressionAtlas" id="Q8NHS2">
    <property type="expression patterns" value="baseline and differential"/>
</dbReference>
<dbReference type="GO" id="GO:0005829">
    <property type="term" value="C:cytosol"/>
    <property type="evidence" value="ECO:0000318"/>
    <property type="project" value="GO_Central"/>
</dbReference>
<dbReference type="GO" id="GO:0004069">
    <property type="term" value="F:L-aspartate:2-oxoglutarate aminotransferase activity"/>
    <property type="evidence" value="ECO:0000318"/>
    <property type="project" value="GO_Central"/>
</dbReference>
<dbReference type="GO" id="GO:0030170">
    <property type="term" value="F:pyridoxal phosphate binding"/>
    <property type="evidence" value="ECO:0007669"/>
    <property type="project" value="InterPro"/>
</dbReference>
<dbReference type="GO" id="GO:0006532">
    <property type="term" value="P:aspartate biosynthetic process"/>
    <property type="evidence" value="ECO:0000318"/>
    <property type="project" value="GO_Central"/>
</dbReference>
<dbReference type="CDD" id="cd00609">
    <property type="entry name" value="AAT_like"/>
    <property type="match status" value="1"/>
</dbReference>
<dbReference type="FunFam" id="3.40.640.10:FF:000098">
    <property type="entry name" value="Glutamic-oxaloacetic transaminase 1 like 1"/>
    <property type="match status" value="1"/>
</dbReference>
<dbReference type="FunFam" id="3.90.1150.10:FF:000306">
    <property type="entry name" value="Glutamic-oxaloacetic transaminase 1-like 1"/>
    <property type="match status" value="1"/>
</dbReference>
<dbReference type="Gene3D" id="3.90.1150.10">
    <property type="entry name" value="Aspartate Aminotransferase, domain 1"/>
    <property type="match status" value="1"/>
</dbReference>
<dbReference type="Gene3D" id="3.40.640.10">
    <property type="entry name" value="Type I PLP-dependent aspartate aminotransferase-like (Major domain)"/>
    <property type="match status" value="1"/>
</dbReference>
<dbReference type="InterPro" id="IPR004839">
    <property type="entry name" value="Aminotransferase_I/II_large"/>
</dbReference>
<dbReference type="InterPro" id="IPR000796">
    <property type="entry name" value="Asp_trans"/>
</dbReference>
<dbReference type="InterPro" id="IPR015424">
    <property type="entry name" value="PyrdxlP-dep_Trfase"/>
</dbReference>
<dbReference type="InterPro" id="IPR015421">
    <property type="entry name" value="PyrdxlP-dep_Trfase_major"/>
</dbReference>
<dbReference type="InterPro" id="IPR015422">
    <property type="entry name" value="PyrdxlP-dep_Trfase_small"/>
</dbReference>
<dbReference type="PANTHER" id="PTHR11879">
    <property type="entry name" value="ASPARTATE AMINOTRANSFERASE"/>
    <property type="match status" value="1"/>
</dbReference>
<dbReference type="PANTHER" id="PTHR11879:SF6">
    <property type="entry name" value="ASPARTATE AMINOTRANSFERASE, CYTOPLASMIC 2-RELATED"/>
    <property type="match status" value="1"/>
</dbReference>
<dbReference type="Pfam" id="PF00155">
    <property type="entry name" value="Aminotran_1_2"/>
    <property type="match status" value="1"/>
</dbReference>
<dbReference type="PRINTS" id="PR00799">
    <property type="entry name" value="TRANSAMINASE"/>
</dbReference>
<dbReference type="SUPFAM" id="SSF53383">
    <property type="entry name" value="PLP-dependent transferases"/>
    <property type="match status" value="1"/>
</dbReference>